<keyword id="KW-0249">Electron transport</keyword>
<keyword id="KW-0349">Heme</keyword>
<keyword id="KW-0408">Iron</keyword>
<keyword id="KW-0472">Membrane</keyword>
<keyword id="KW-0479">Metal-binding</keyword>
<keyword id="KW-0496">Mitochondrion</keyword>
<keyword id="KW-0999">Mitochondrion inner membrane</keyword>
<keyword id="KW-0679">Respiratory chain</keyword>
<keyword id="KW-0812">Transmembrane</keyword>
<keyword id="KW-1133">Transmembrane helix</keyword>
<keyword id="KW-0813">Transport</keyword>
<keyword id="KW-0830">Ubiquinone</keyword>
<protein>
    <recommendedName>
        <fullName>Cytochrome b</fullName>
    </recommendedName>
    <alternativeName>
        <fullName>Complex III subunit 3</fullName>
    </alternativeName>
    <alternativeName>
        <fullName>Complex III subunit III</fullName>
    </alternativeName>
    <alternativeName>
        <fullName>Cytochrome b-c1 complex subunit 3</fullName>
    </alternativeName>
    <alternativeName>
        <fullName>Ubiquinol-cytochrome-c reductase complex cytochrome b subunit</fullName>
    </alternativeName>
</protein>
<organism>
    <name type="scientific">Perognathus flavescens apache</name>
    <name type="common">Apache pocket mouse</name>
    <name type="synonym">Perognathus apache</name>
    <dbReference type="NCBI Taxonomy" id="306045"/>
    <lineage>
        <taxon>Eukaryota</taxon>
        <taxon>Metazoa</taxon>
        <taxon>Chordata</taxon>
        <taxon>Craniata</taxon>
        <taxon>Vertebrata</taxon>
        <taxon>Euteleostomi</taxon>
        <taxon>Mammalia</taxon>
        <taxon>Eutheria</taxon>
        <taxon>Euarchontoglires</taxon>
        <taxon>Glires</taxon>
        <taxon>Rodentia</taxon>
        <taxon>Castorimorpha</taxon>
        <taxon>Heteromyidae</taxon>
        <taxon>Perognathinae</taxon>
        <taxon>Perognathus</taxon>
    </lineage>
</organism>
<proteinExistence type="inferred from homology"/>
<dbReference type="EMBL" id="AY926412">
    <property type="protein sequence ID" value="AAY23255.1"/>
    <property type="molecule type" value="Genomic_DNA"/>
</dbReference>
<dbReference type="GO" id="GO:0005743">
    <property type="term" value="C:mitochondrial inner membrane"/>
    <property type="evidence" value="ECO:0007669"/>
    <property type="project" value="UniProtKB-SubCell"/>
</dbReference>
<dbReference type="GO" id="GO:0045275">
    <property type="term" value="C:respiratory chain complex III"/>
    <property type="evidence" value="ECO:0007669"/>
    <property type="project" value="InterPro"/>
</dbReference>
<dbReference type="GO" id="GO:0046872">
    <property type="term" value="F:metal ion binding"/>
    <property type="evidence" value="ECO:0007669"/>
    <property type="project" value="UniProtKB-KW"/>
</dbReference>
<dbReference type="GO" id="GO:0008121">
    <property type="term" value="F:ubiquinol-cytochrome-c reductase activity"/>
    <property type="evidence" value="ECO:0007669"/>
    <property type="project" value="InterPro"/>
</dbReference>
<dbReference type="GO" id="GO:0006122">
    <property type="term" value="P:mitochondrial electron transport, ubiquinol to cytochrome c"/>
    <property type="evidence" value="ECO:0007669"/>
    <property type="project" value="TreeGrafter"/>
</dbReference>
<dbReference type="CDD" id="cd00290">
    <property type="entry name" value="cytochrome_b_C"/>
    <property type="match status" value="1"/>
</dbReference>
<dbReference type="CDD" id="cd00284">
    <property type="entry name" value="Cytochrome_b_N"/>
    <property type="match status" value="1"/>
</dbReference>
<dbReference type="FunFam" id="1.20.810.10:FF:000002">
    <property type="entry name" value="Cytochrome b"/>
    <property type="match status" value="1"/>
</dbReference>
<dbReference type="Gene3D" id="1.20.810.10">
    <property type="entry name" value="Cytochrome Bc1 Complex, Chain C"/>
    <property type="match status" value="1"/>
</dbReference>
<dbReference type="InterPro" id="IPR005798">
    <property type="entry name" value="Cyt_b/b6_C"/>
</dbReference>
<dbReference type="InterPro" id="IPR036150">
    <property type="entry name" value="Cyt_b/b6_C_sf"/>
</dbReference>
<dbReference type="InterPro" id="IPR005797">
    <property type="entry name" value="Cyt_b/b6_N"/>
</dbReference>
<dbReference type="InterPro" id="IPR027387">
    <property type="entry name" value="Cytb/b6-like_sf"/>
</dbReference>
<dbReference type="InterPro" id="IPR030689">
    <property type="entry name" value="Cytochrome_b"/>
</dbReference>
<dbReference type="InterPro" id="IPR048260">
    <property type="entry name" value="Cytochrome_b_C_euk/bac"/>
</dbReference>
<dbReference type="InterPro" id="IPR048259">
    <property type="entry name" value="Cytochrome_b_N_euk/bac"/>
</dbReference>
<dbReference type="InterPro" id="IPR016174">
    <property type="entry name" value="Di-haem_cyt_TM"/>
</dbReference>
<dbReference type="PANTHER" id="PTHR19271">
    <property type="entry name" value="CYTOCHROME B"/>
    <property type="match status" value="1"/>
</dbReference>
<dbReference type="PANTHER" id="PTHR19271:SF16">
    <property type="entry name" value="CYTOCHROME B"/>
    <property type="match status" value="1"/>
</dbReference>
<dbReference type="Pfam" id="PF00032">
    <property type="entry name" value="Cytochrom_B_C"/>
    <property type="match status" value="1"/>
</dbReference>
<dbReference type="Pfam" id="PF00033">
    <property type="entry name" value="Cytochrome_B"/>
    <property type="match status" value="1"/>
</dbReference>
<dbReference type="PIRSF" id="PIRSF038885">
    <property type="entry name" value="COB"/>
    <property type="match status" value="1"/>
</dbReference>
<dbReference type="SUPFAM" id="SSF81648">
    <property type="entry name" value="a domain/subunit of cytochrome bc1 complex (Ubiquinol-cytochrome c reductase)"/>
    <property type="match status" value="1"/>
</dbReference>
<dbReference type="SUPFAM" id="SSF81342">
    <property type="entry name" value="Transmembrane di-heme cytochromes"/>
    <property type="match status" value="1"/>
</dbReference>
<dbReference type="PROSITE" id="PS51003">
    <property type="entry name" value="CYTB_CTER"/>
    <property type="match status" value="1"/>
</dbReference>
<dbReference type="PROSITE" id="PS51002">
    <property type="entry name" value="CYTB_NTER"/>
    <property type="match status" value="1"/>
</dbReference>
<name>CYB_PERFP</name>
<comment type="function">
    <text evidence="2">Component of the ubiquinol-cytochrome c reductase complex (complex III or cytochrome b-c1 complex) that is part of the mitochondrial respiratory chain. The b-c1 complex mediates electron transfer from ubiquinol to cytochrome c. Contributes to the generation of a proton gradient across the mitochondrial membrane that is then used for ATP synthesis.</text>
</comment>
<comment type="cofactor">
    <cofactor evidence="2">
        <name>heme b</name>
        <dbReference type="ChEBI" id="CHEBI:60344"/>
    </cofactor>
    <text evidence="2">Binds 2 heme b groups non-covalently.</text>
</comment>
<comment type="subunit">
    <text evidence="2">The cytochrome bc1 complex contains 11 subunits: 3 respiratory subunits (MT-CYB, CYC1 and UQCRFS1), 2 core proteins (UQCRC1 and UQCRC2) and 6 low-molecular weight proteins (UQCRH/QCR6, UQCRB/QCR7, UQCRQ/QCR8, UQCR10/QCR9, UQCR11/QCR10 and a cleavage product of UQCRFS1). This cytochrome bc1 complex then forms a dimer.</text>
</comment>
<comment type="subcellular location">
    <subcellularLocation>
        <location evidence="2">Mitochondrion inner membrane</location>
        <topology evidence="2">Multi-pass membrane protein</topology>
    </subcellularLocation>
</comment>
<comment type="miscellaneous">
    <text evidence="1">Heme 1 (or BL or b562) is low-potential and absorbs at about 562 nm, and heme 2 (or BH or b566) is high-potential and absorbs at about 566 nm.</text>
</comment>
<comment type="similarity">
    <text evidence="3 4">Belongs to the cytochrome b family.</text>
</comment>
<comment type="caution">
    <text evidence="2">The full-length protein contains only eight transmembrane helices, not nine as predicted by bioinformatics tools.</text>
</comment>
<feature type="chain" id="PRO_0000255109" description="Cytochrome b">
    <location>
        <begin position="1"/>
        <end position="379"/>
    </location>
</feature>
<feature type="transmembrane region" description="Helical" evidence="2">
    <location>
        <begin position="33"/>
        <end position="53"/>
    </location>
</feature>
<feature type="transmembrane region" description="Helical" evidence="2">
    <location>
        <begin position="77"/>
        <end position="98"/>
    </location>
</feature>
<feature type="transmembrane region" description="Helical" evidence="2">
    <location>
        <begin position="113"/>
        <end position="133"/>
    </location>
</feature>
<feature type="transmembrane region" description="Helical" evidence="2">
    <location>
        <begin position="178"/>
        <end position="198"/>
    </location>
</feature>
<feature type="transmembrane region" description="Helical" evidence="2">
    <location>
        <begin position="226"/>
        <end position="246"/>
    </location>
</feature>
<feature type="transmembrane region" description="Helical" evidence="2">
    <location>
        <begin position="288"/>
        <end position="308"/>
    </location>
</feature>
<feature type="transmembrane region" description="Helical" evidence="2">
    <location>
        <begin position="320"/>
        <end position="340"/>
    </location>
</feature>
<feature type="transmembrane region" description="Helical" evidence="2">
    <location>
        <begin position="347"/>
        <end position="367"/>
    </location>
</feature>
<feature type="binding site" description="axial binding residue" evidence="2">
    <location>
        <position position="83"/>
    </location>
    <ligand>
        <name>heme b</name>
        <dbReference type="ChEBI" id="CHEBI:60344"/>
        <label>b562</label>
    </ligand>
    <ligandPart>
        <name>Fe</name>
        <dbReference type="ChEBI" id="CHEBI:18248"/>
    </ligandPart>
</feature>
<feature type="binding site" description="axial binding residue" evidence="2">
    <location>
        <position position="97"/>
    </location>
    <ligand>
        <name>heme b</name>
        <dbReference type="ChEBI" id="CHEBI:60344"/>
        <label>b566</label>
    </ligand>
    <ligandPart>
        <name>Fe</name>
        <dbReference type="ChEBI" id="CHEBI:18248"/>
    </ligandPart>
</feature>
<feature type="binding site" description="axial binding residue" evidence="2">
    <location>
        <position position="182"/>
    </location>
    <ligand>
        <name>heme b</name>
        <dbReference type="ChEBI" id="CHEBI:60344"/>
        <label>b562</label>
    </ligand>
    <ligandPart>
        <name>Fe</name>
        <dbReference type="ChEBI" id="CHEBI:18248"/>
    </ligandPart>
</feature>
<feature type="binding site" description="axial binding residue" evidence="2">
    <location>
        <position position="196"/>
    </location>
    <ligand>
        <name>heme b</name>
        <dbReference type="ChEBI" id="CHEBI:60344"/>
        <label>b566</label>
    </ligand>
    <ligandPart>
        <name>Fe</name>
        <dbReference type="ChEBI" id="CHEBI:18248"/>
    </ligandPart>
</feature>
<feature type="binding site" evidence="2">
    <location>
        <position position="201"/>
    </location>
    <ligand>
        <name>a ubiquinone</name>
        <dbReference type="ChEBI" id="CHEBI:16389"/>
    </ligand>
</feature>
<sequence length="379" mass="42833">MTIIRKSHPLIKLVNHAFIDLPTPSNISGWWNFGSLLGVCLVIQISTGLFXSMHYTSDTLTAFSSVSHICRDVNYGWLIRYMHANGASLFFICLYFHIGRGIYYGSYLYMETWNIGIILLFMVMATAFMGYVLPWGQMSFWGATVITNLLSAIPYIGSDLVEWIWGGXSVDKATLTRFFAFHFIXPFIIAAMAMVHLLXLHETGSNNPLGIPSDADKIPFHPYYSFKDLLGIVSLLSFYLTIVLFFPDAMGDPDNYMPANPLNTPPHIKPEWYFLFAYAILRSIPNKLGGVMALVLSILVLAMFPFLHTSNQRGMMFRPISQAXYWXLVSDLFILTWIGGQPVEPPFIIIGQLASIFYFSIILILLPVAGXXENKLLKW</sequence>
<gene>
    <name type="primary">MT-CYB</name>
    <name type="synonym">COB</name>
    <name type="synonym">CYTB</name>
    <name type="synonym">MTCYB</name>
</gene>
<accession>Q508J1</accession>
<evidence type="ECO:0000250" key="1"/>
<evidence type="ECO:0000250" key="2">
    <source>
        <dbReference type="UniProtKB" id="P00157"/>
    </source>
</evidence>
<evidence type="ECO:0000255" key="3">
    <source>
        <dbReference type="PROSITE-ProRule" id="PRU00967"/>
    </source>
</evidence>
<evidence type="ECO:0000255" key="4">
    <source>
        <dbReference type="PROSITE-ProRule" id="PRU00968"/>
    </source>
</evidence>
<geneLocation type="mitochondrion"/>
<reference key="1">
    <citation type="journal article" date="2005" name="J. Mammal.">
        <title>Phylogenetics of the new world rodent family Heteromyidae.</title>
        <authorList>
            <person name="Alexander L.F."/>
            <person name="Riddle B.R."/>
        </authorList>
    </citation>
    <scope>NUCLEOTIDE SEQUENCE [GENOMIC DNA]</scope>
    <source>
        <strain>Isolate LVT 3703</strain>
    </source>
</reference>